<gene>
    <name evidence="1" type="primary">adk</name>
    <name type="ordered locus">LBJ_2638</name>
</gene>
<feature type="chain" id="PRO_1000058849" description="Adenylate kinase">
    <location>
        <begin position="1"/>
        <end position="187"/>
    </location>
</feature>
<feature type="region of interest" description="NMP" evidence="1">
    <location>
        <begin position="31"/>
        <end position="60"/>
    </location>
</feature>
<feature type="region of interest" description="LID" evidence="1">
    <location>
        <begin position="127"/>
        <end position="137"/>
    </location>
</feature>
<feature type="binding site" evidence="1">
    <location>
        <begin position="11"/>
        <end position="16"/>
    </location>
    <ligand>
        <name>ATP</name>
        <dbReference type="ChEBI" id="CHEBI:30616"/>
    </ligand>
</feature>
<feature type="binding site" evidence="1">
    <location>
        <position position="32"/>
    </location>
    <ligand>
        <name>AMP</name>
        <dbReference type="ChEBI" id="CHEBI:456215"/>
    </ligand>
</feature>
<feature type="binding site" evidence="1">
    <location>
        <position position="37"/>
    </location>
    <ligand>
        <name>AMP</name>
        <dbReference type="ChEBI" id="CHEBI:456215"/>
    </ligand>
</feature>
<feature type="binding site" evidence="1">
    <location>
        <begin position="58"/>
        <end position="60"/>
    </location>
    <ligand>
        <name>AMP</name>
        <dbReference type="ChEBI" id="CHEBI:456215"/>
    </ligand>
</feature>
<feature type="binding site" evidence="1">
    <location>
        <begin position="86"/>
        <end position="89"/>
    </location>
    <ligand>
        <name>AMP</name>
        <dbReference type="ChEBI" id="CHEBI:456215"/>
    </ligand>
</feature>
<feature type="binding site" evidence="1">
    <location>
        <position position="93"/>
    </location>
    <ligand>
        <name>AMP</name>
        <dbReference type="ChEBI" id="CHEBI:456215"/>
    </ligand>
</feature>
<feature type="binding site" evidence="1">
    <location>
        <position position="128"/>
    </location>
    <ligand>
        <name>ATP</name>
        <dbReference type="ChEBI" id="CHEBI:30616"/>
    </ligand>
</feature>
<feature type="binding site" evidence="1">
    <location>
        <position position="134"/>
    </location>
    <ligand>
        <name>AMP</name>
        <dbReference type="ChEBI" id="CHEBI:456215"/>
    </ligand>
</feature>
<feature type="binding site" evidence="1">
    <location>
        <position position="145"/>
    </location>
    <ligand>
        <name>AMP</name>
        <dbReference type="ChEBI" id="CHEBI:456215"/>
    </ligand>
</feature>
<feature type="binding site" evidence="1">
    <location>
        <position position="173"/>
    </location>
    <ligand>
        <name>ATP</name>
        <dbReference type="ChEBI" id="CHEBI:30616"/>
    </ligand>
</feature>
<accession>Q04PV9</accession>
<dbReference type="EC" id="2.7.4.3" evidence="1"/>
<dbReference type="EMBL" id="CP000350">
    <property type="protein sequence ID" value="ABJ77061.1"/>
    <property type="molecule type" value="Genomic_DNA"/>
</dbReference>
<dbReference type="SMR" id="Q04PV9"/>
<dbReference type="KEGG" id="lbj:LBJ_2638"/>
<dbReference type="HOGENOM" id="CLU_032354_1_2_12"/>
<dbReference type="UniPathway" id="UPA00588">
    <property type="reaction ID" value="UER00649"/>
</dbReference>
<dbReference type="Proteomes" id="UP000000656">
    <property type="component" value="Chromosome 1"/>
</dbReference>
<dbReference type="GO" id="GO:0005737">
    <property type="term" value="C:cytoplasm"/>
    <property type="evidence" value="ECO:0007669"/>
    <property type="project" value="UniProtKB-SubCell"/>
</dbReference>
<dbReference type="GO" id="GO:0004017">
    <property type="term" value="F:adenylate kinase activity"/>
    <property type="evidence" value="ECO:0007669"/>
    <property type="project" value="UniProtKB-UniRule"/>
</dbReference>
<dbReference type="GO" id="GO:0005524">
    <property type="term" value="F:ATP binding"/>
    <property type="evidence" value="ECO:0007669"/>
    <property type="project" value="UniProtKB-UniRule"/>
</dbReference>
<dbReference type="GO" id="GO:0044209">
    <property type="term" value="P:AMP salvage"/>
    <property type="evidence" value="ECO:0007669"/>
    <property type="project" value="UniProtKB-UniRule"/>
</dbReference>
<dbReference type="CDD" id="cd01428">
    <property type="entry name" value="ADK"/>
    <property type="match status" value="1"/>
</dbReference>
<dbReference type="Gene3D" id="3.40.50.300">
    <property type="entry name" value="P-loop containing nucleotide triphosphate hydrolases"/>
    <property type="match status" value="1"/>
</dbReference>
<dbReference type="HAMAP" id="MF_00235">
    <property type="entry name" value="Adenylate_kinase_Adk"/>
    <property type="match status" value="1"/>
</dbReference>
<dbReference type="InterPro" id="IPR006259">
    <property type="entry name" value="Adenyl_kin_sub"/>
</dbReference>
<dbReference type="InterPro" id="IPR000850">
    <property type="entry name" value="Adenylat/UMP-CMP_kin"/>
</dbReference>
<dbReference type="InterPro" id="IPR033690">
    <property type="entry name" value="Adenylat_kinase_CS"/>
</dbReference>
<dbReference type="InterPro" id="IPR027417">
    <property type="entry name" value="P-loop_NTPase"/>
</dbReference>
<dbReference type="NCBIfam" id="TIGR01351">
    <property type="entry name" value="adk"/>
    <property type="match status" value="1"/>
</dbReference>
<dbReference type="NCBIfam" id="NF001381">
    <property type="entry name" value="PRK00279.1-3"/>
    <property type="match status" value="1"/>
</dbReference>
<dbReference type="NCBIfam" id="NF011100">
    <property type="entry name" value="PRK14527.1"/>
    <property type="match status" value="1"/>
</dbReference>
<dbReference type="NCBIfam" id="NF011101">
    <property type="entry name" value="PRK14528.1"/>
    <property type="match status" value="1"/>
</dbReference>
<dbReference type="NCBIfam" id="NF011104">
    <property type="entry name" value="PRK14531.1"/>
    <property type="match status" value="1"/>
</dbReference>
<dbReference type="NCBIfam" id="NF011105">
    <property type="entry name" value="PRK14532.1"/>
    <property type="match status" value="1"/>
</dbReference>
<dbReference type="PANTHER" id="PTHR23359">
    <property type="entry name" value="NUCLEOTIDE KINASE"/>
    <property type="match status" value="1"/>
</dbReference>
<dbReference type="Pfam" id="PF00406">
    <property type="entry name" value="ADK"/>
    <property type="match status" value="1"/>
</dbReference>
<dbReference type="PRINTS" id="PR00094">
    <property type="entry name" value="ADENYLTKNASE"/>
</dbReference>
<dbReference type="SUPFAM" id="SSF52540">
    <property type="entry name" value="P-loop containing nucleoside triphosphate hydrolases"/>
    <property type="match status" value="1"/>
</dbReference>
<dbReference type="PROSITE" id="PS00113">
    <property type="entry name" value="ADENYLATE_KINASE"/>
    <property type="match status" value="1"/>
</dbReference>
<organism>
    <name type="scientific">Leptospira borgpetersenii serovar Hardjo-bovis (strain JB197)</name>
    <dbReference type="NCBI Taxonomy" id="355277"/>
    <lineage>
        <taxon>Bacteria</taxon>
        <taxon>Pseudomonadati</taxon>
        <taxon>Spirochaetota</taxon>
        <taxon>Spirochaetia</taxon>
        <taxon>Leptospirales</taxon>
        <taxon>Leptospiraceae</taxon>
        <taxon>Leptospira</taxon>
    </lineage>
</organism>
<protein>
    <recommendedName>
        <fullName evidence="1">Adenylate kinase</fullName>
        <shortName evidence="1">AK</shortName>
        <ecNumber evidence="1">2.7.4.3</ecNumber>
    </recommendedName>
    <alternativeName>
        <fullName evidence="1">ATP-AMP transphosphorylase</fullName>
    </alternativeName>
    <alternativeName>
        <fullName evidence="1">ATP:AMP phosphotransferase</fullName>
    </alternativeName>
    <alternativeName>
        <fullName evidence="1">Adenylate monophosphate kinase</fullName>
    </alternativeName>
</protein>
<evidence type="ECO:0000255" key="1">
    <source>
        <dbReference type="HAMAP-Rule" id="MF_00235"/>
    </source>
</evidence>
<keyword id="KW-0067">ATP-binding</keyword>
<keyword id="KW-0963">Cytoplasm</keyword>
<keyword id="KW-0418">Kinase</keyword>
<keyword id="KW-0545">Nucleotide biosynthesis</keyword>
<keyword id="KW-0547">Nucleotide-binding</keyword>
<keyword id="KW-0808">Transferase</keyword>
<sequence length="187" mass="20489">MKNIIFMGPPGAGKGTQAKILCARLSIPQISTGDILREAVKNQTPMGIEAKRYMDAGDLVPDSVVIGIIKDRIREADCKNGFLLDGFPRTVEQADALDALLKNEGKSIDKAINLEVPDGELLKRLLGRAEIEGRADDNEATIKNRLDNYNKKTLPLLDFYAAQKKLSQVNGVGTLEEVTSLIQRELV</sequence>
<proteinExistence type="inferred from homology"/>
<reference key="1">
    <citation type="journal article" date="2006" name="Proc. Natl. Acad. Sci. U.S.A.">
        <title>Genome reduction in Leptospira borgpetersenii reflects limited transmission potential.</title>
        <authorList>
            <person name="Bulach D.M."/>
            <person name="Zuerner R.L."/>
            <person name="Wilson P."/>
            <person name="Seemann T."/>
            <person name="McGrath A."/>
            <person name="Cullen P.A."/>
            <person name="Davis J."/>
            <person name="Johnson M."/>
            <person name="Kuczek E."/>
            <person name="Alt D.P."/>
            <person name="Peterson-Burch B."/>
            <person name="Coppel R.L."/>
            <person name="Rood J.I."/>
            <person name="Davies J.K."/>
            <person name="Adler B."/>
        </authorList>
    </citation>
    <scope>NUCLEOTIDE SEQUENCE [LARGE SCALE GENOMIC DNA]</scope>
    <source>
        <strain>JB197</strain>
    </source>
</reference>
<comment type="function">
    <text evidence="1">Catalyzes the reversible transfer of the terminal phosphate group between ATP and AMP. Plays an important role in cellular energy homeostasis and in adenine nucleotide metabolism.</text>
</comment>
<comment type="catalytic activity">
    <reaction evidence="1">
        <text>AMP + ATP = 2 ADP</text>
        <dbReference type="Rhea" id="RHEA:12973"/>
        <dbReference type="ChEBI" id="CHEBI:30616"/>
        <dbReference type="ChEBI" id="CHEBI:456215"/>
        <dbReference type="ChEBI" id="CHEBI:456216"/>
        <dbReference type="EC" id="2.7.4.3"/>
    </reaction>
</comment>
<comment type="pathway">
    <text evidence="1">Purine metabolism; AMP biosynthesis via salvage pathway; AMP from ADP: step 1/1.</text>
</comment>
<comment type="subunit">
    <text evidence="1">Monomer.</text>
</comment>
<comment type="subcellular location">
    <subcellularLocation>
        <location evidence="1">Cytoplasm</location>
    </subcellularLocation>
</comment>
<comment type="domain">
    <text evidence="1">Consists of three domains, a large central CORE domain and two small peripheral domains, NMPbind and LID, which undergo movements during catalysis. The LID domain closes over the site of phosphoryl transfer upon ATP binding. Assembling and dissambling the active center during each catalytic cycle provides an effective means to prevent ATP hydrolysis.</text>
</comment>
<comment type="similarity">
    <text evidence="1">Belongs to the adenylate kinase family.</text>
</comment>
<name>KAD_LEPBJ</name>